<sequence length="83" mass="9220">MKASRFLALAGLVLLFVVGYASESEEKEFPRELLSKIFAVDDFKGEERGCKGFGDSCTPGKNECCPNYACSSKHKWCKVYLGK</sequence>
<reference key="1">
    <citation type="journal article" date="2010" name="J. Proteome Res.">
        <title>Molecular diversification of peptide toxins from the tarantula Haplopelma hainanum (Ornithoctonus hainana) venom based on transcriptomic, peptidomic, and genomic analyses.</title>
        <authorList>
            <person name="Tang X."/>
            <person name="Zhang Y."/>
            <person name="Hu W."/>
            <person name="Xu D."/>
            <person name="Tao H."/>
            <person name="Yang X."/>
            <person name="Li Y."/>
            <person name="Jiang L."/>
            <person name="Liang S."/>
        </authorList>
    </citation>
    <scope>NUCLEOTIDE SEQUENCE [LARGE SCALE MRNA]</scope>
    <scope>PROTEIN SEQUENCE OF 49-81</scope>
    <scope>IDENTIFICATION BY MASS SPECTROMETRY</scope>
    <source>
        <tissue>Venom</tissue>
        <tissue>Venom gland</tissue>
    </source>
</reference>
<reference key="2">
    <citation type="journal article" date="2003" name="Eur. J. Pharmacol.">
        <title>Inhibition of neuronal tetrodotoxin-sensitive Na+ channels by two spider toxins: hainantoxin-III and hainantoxin-IV.</title>
        <authorList>
            <person name="Xiao Y."/>
            <person name="Liang S."/>
        </authorList>
    </citation>
    <scope>PROTEIN SEQUENCE OF 49-81</scope>
    <scope>FUNCTION</scope>
    <scope>SUBCELLULAR LOCATION</scope>
    <scope>AMIDATION AT LEU-81</scope>
    <source>
        <tissue>Venom</tissue>
    </source>
</reference>
<reference key="3">
    <citation type="submission" date="2002-10" db="UniProtKB">
        <title>Function and solution structure of hainantoxin-III, a potent neuronal TTX-sensitive sodium channel antagonist from Chinese bird spider Selenocosmia hainana.</title>
        <authorList>
            <person name="Zhu Q."/>
            <person name="Liu Z.-H."/>
            <person name="Liang S.-P."/>
        </authorList>
    </citation>
    <scope>SUBUNIT</scope>
    <scope>MASS SPECTROMETRY</scope>
</reference>
<reference key="4">
    <citation type="journal article" date="2013" name="J. Biol. Chem.">
        <title>Structure and function of hainantoxin-III, a selective antagonist of neuronal tetrodotoxin-sensitive voltage-gated sodium channels isolated from the Chinese bird spider Ornithoctonus hainana.</title>
        <authorList>
            <person name="Liu Z."/>
            <person name="Cai T."/>
            <person name="Zhu Q."/>
            <person name="Deng M."/>
            <person name="Li J."/>
            <person name="Zhou X."/>
            <person name="Zhang F."/>
            <person name="Li D."/>
            <person name="Li J."/>
            <person name="Liu Y."/>
            <person name="Hu W."/>
            <person name="Liang S."/>
        </authorList>
    </citation>
    <scope>FUNCTION</scope>
    <scope>SUBCELLULAR LOCATION</scope>
    <scope>STRUCTURE BY NMR OF 49-81</scope>
    <scope>DISULFIDE BONDS</scope>
    <source>
        <tissue>Venom</tissue>
    </source>
</reference>
<reference key="5">
    <citation type="submission" date="2007-07" db="PDB data bank">
        <title>Three dimensional solution structure of hainantoxin-III by 2D 1H-NMR.</title>
        <authorList>
            <person name="Zhu Q."/>
            <person name="Liu Z."/>
            <person name="Liang S."/>
        </authorList>
    </citation>
    <scope>STRUCTURE BY NMR OF 49-81</scope>
    <scope>DISULFIDE BONDS</scope>
</reference>
<proteinExistence type="evidence at protein level"/>
<accession>D2Y1Y3</accession>
<accession>P83464</accession>
<evidence type="ECO:0000255" key="1"/>
<evidence type="ECO:0000269" key="2">
    <source>
    </source>
</evidence>
<evidence type="ECO:0000269" key="3">
    <source>
    </source>
</evidence>
<evidence type="ECO:0000269" key="4">
    <source>
    </source>
</evidence>
<evidence type="ECO:0000269" key="5">
    <source ref="3"/>
</evidence>
<evidence type="ECO:0000269" key="6">
    <source ref="5"/>
</evidence>
<evidence type="ECO:0000303" key="7">
    <source>
    </source>
</evidence>
<evidence type="ECO:0000303" key="8">
    <source ref="5"/>
</evidence>
<evidence type="ECO:0000305" key="9"/>
<evidence type="ECO:0000305" key="10">
    <source>
    </source>
</evidence>
<evidence type="ECO:0000305" key="11">
    <source>
    </source>
</evidence>
<protein>
    <recommendedName>
        <fullName evidence="7 8">Hainantoxin-III 5</fullName>
        <shortName evidence="7 8">HnTx-III</shortName>
    </recommendedName>
    <alternativeName>
        <fullName>Hainantoxin-3.5</fullName>
    </alternativeName>
    <alternativeName>
        <fullName>Mu-theraphotoxin-Hhn2a</fullName>
        <shortName>Mu-TRTX-Hhn2a</shortName>
    </alternativeName>
    <alternativeName>
        <fullName>Peptide F7-18.76</fullName>
    </alternativeName>
</protein>
<feature type="signal peptide" evidence="1">
    <location>
        <begin position="1"/>
        <end position="21"/>
    </location>
</feature>
<feature type="propeptide" id="PRO_0000400512" evidence="2 3">
    <location>
        <begin position="22"/>
        <end position="48"/>
    </location>
</feature>
<feature type="peptide" id="PRO_0000400513" description="Hainantoxin-III 5" evidence="2 3">
    <location>
        <begin position="49"/>
        <end position="81"/>
    </location>
</feature>
<feature type="modified residue" description="Leucine amide" evidence="2">
    <location>
        <position position="81"/>
    </location>
</feature>
<feature type="disulfide bond" evidence="4 6">
    <location>
        <begin position="50"/>
        <end position="65"/>
    </location>
</feature>
<feature type="disulfide bond" evidence="4 6">
    <location>
        <begin position="57"/>
        <end position="70"/>
    </location>
</feature>
<feature type="disulfide bond" evidence="4 6">
    <location>
        <begin position="64"/>
        <end position="77"/>
    </location>
</feature>
<organism>
    <name type="scientific">Cyriopagopus hainanus</name>
    <name type="common">Chinese bird spider</name>
    <name type="synonym">Haplopelma hainanum</name>
    <dbReference type="NCBI Taxonomy" id="209901"/>
    <lineage>
        <taxon>Eukaryota</taxon>
        <taxon>Metazoa</taxon>
        <taxon>Ecdysozoa</taxon>
        <taxon>Arthropoda</taxon>
        <taxon>Chelicerata</taxon>
        <taxon>Arachnida</taxon>
        <taxon>Araneae</taxon>
        <taxon>Mygalomorphae</taxon>
        <taxon>Theraphosidae</taxon>
        <taxon>Haplopelma</taxon>
    </lineage>
</organism>
<name>H3A05_CYRHA</name>
<comment type="function">
    <text evidence="4">Selective antagonist of neuronal tetrodotoxin (TTX)-sensitive voltage-gated sodium channels (IC(50)=1270 nM on Nav1.1/SCN1A, 270 nM on Nav1.2/SCN2A, 491 nM on Nav1.3/SCN3A and 232 nM on Nav1.7/SCN9A). This toxin suppress Nav1.7 current amplitude without significantly altering the activation, inactivation, and repriming kinetics. Short extreme depolarizations partially activate the toxin-bound channel, indicating voltage-dependent inhibition of this toxin. This toxin increases the deactivation of the Nav1.7 current after extreme depolarizations. The toxin-Nav1.7 complex is gradually dissociated upon prolonged strong depolarizations in a voltage-dependent manner, and the unbound toxin rebinds to Nav1.7 after a long repolarization. Moreover, analysis of chimeric channels showed that the DIIS3-S4 linker is critical for toxin binding to Nav1.7. These data are consistent with this toxin interacting with Nav1.7 site 4 and trapping the domain II voltage sensor in the closed state.</text>
</comment>
<comment type="subunit">
    <text evidence="5">Monomer.</text>
</comment>
<comment type="subcellular location">
    <subcellularLocation>
        <location evidence="2 4">Secreted</location>
    </subcellularLocation>
</comment>
<comment type="tissue specificity">
    <text evidence="10 11">Expressed by the venom gland.</text>
</comment>
<comment type="domain">
    <text evidence="4">The presence of a 'disulfide through disulfide knot' structurally defines this protein as a knottin.</text>
</comment>
<comment type="mass spectrometry" mass="3607.6" method="Electrospray" evidence="5"/>
<comment type="miscellaneous">
    <text evidence="2 4">Negative results: has no activity on Nav1.4, Nav1.5, Nav1.8 and Nav1.9 sodium and calcium currents.</text>
</comment>
<comment type="similarity">
    <text evidence="9">Belongs to the neurotoxin 10 (Hwtx-1) family. 15 (Hntx-3) subfamily.</text>
</comment>
<comment type="caution">
    <text evidence="9">Several genes are coding for this toxin for which the structure by NMR has been determined. The cross-references to PDB and additional information can be found in entry AC D2Y1X9.</text>
</comment>
<dbReference type="EMBL" id="GU292860">
    <property type="protein sequence ID" value="ADB56676.1"/>
    <property type="molecule type" value="mRNA"/>
</dbReference>
<dbReference type="SMR" id="D2Y1Y3"/>
<dbReference type="ArachnoServer" id="AS000339">
    <property type="toxin name" value="mu-theraphotoxin-Hhn2a"/>
</dbReference>
<dbReference type="GO" id="GO:0005576">
    <property type="term" value="C:extracellular region"/>
    <property type="evidence" value="ECO:0007669"/>
    <property type="project" value="UniProtKB-SubCell"/>
</dbReference>
<dbReference type="GO" id="GO:0044231">
    <property type="term" value="C:host cell presynaptic membrane"/>
    <property type="evidence" value="ECO:0007669"/>
    <property type="project" value="UniProtKB-KW"/>
</dbReference>
<dbReference type="GO" id="GO:0008200">
    <property type="term" value="F:ion channel inhibitor activity"/>
    <property type="evidence" value="ECO:0007669"/>
    <property type="project" value="InterPro"/>
</dbReference>
<dbReference type="GO" id="GO:0017080">
    <property type="term" value="F:sodium channel regulator activity"/>
    <property type="evidence" value="ECO:0007669"/>
    <property type="project" value="UniProtKB-KW"/>
</dbReference>
<dbReference type="GO" id="GO:0090729">
    <property type="term" value="F:toxin activity"/>
    <property type="evidence" value="ECO:0007669"/>
    <property type="project" value="UniProtKB-KW"/>
</dbReference>
<dbReference type="InterPro" id="IPR011696">
    <property type="entry name" value="Huwentoxin-1"/>
</dbReference>
<dbReference type="InterPro" id="IPR013140">
    <property type="entry name" value="Huwentoxin_CS1"/>
</dbReference>
<dbReference type="Pfam" id="PF07740">
    <property type="entry name" value="Toxin_12"/>
    <property type="match status" value="1"/>
</dbReference>
<dbReference type="SUPFAM" id="SSF57059">
    <property type="entry name" value="omega toxin-like"/>
    <property type="match status" value="1"/>
</dbReference>
<dbReference type="PROSITE" id="PS60021">
    <property type="entry name" value="HWTX_1"/>
    <property type="match status" value="1"/>
</dbReference>
<keyword id="KW-0027">Amidation</keyword>
<keyword id="KW-0903">Direct protein sequencing</keyword>
<keyword id="KW-1015">Disulfide bond</keyword>
<keyword id="KW-0872">Ion channel impairing toxin</keyword>
<keyword id="KW-0960">Knottin</keyword>
<keyword id="KW-0528">Neurotoxin</keyword>
<keyword id="KW-0638">Presynaptic neurotoxin</keyword>
<keyword id="KW-0964">Secreted</keyword>
<keyword id="KW-0732">Signal</keyword>
<keyword id="KW-0800">Toxin</keyword>
<keyword id="KW-0738">Voltage-gated sodium channel impairing toxin</keyword>